<dbReference type="EMBL" id="AY427820">
    <property type="protein sequence ID" value="AAR05120.1"/>
    <property type="molecule type" value="mRNA"/>
</dbReference>
<dbReference type="EMBL" id="AB154410">
    <property type="protein sequence ID" value="BAD20638.1"/>
    <property type="molecule type" value="mRNA"/>
</dbReference>
<dbReference type="EMBL" id="AB083627">
    <property type="protein sequence ID" value="BAB89340.1"/>
    <property type="molecule type" value="Genomic_DNA"/>
</dbReference>
<dbReference type="EMBL" id="AB065786">
    <property type="protein sequence ID" value="BAC06005.1"/>
    <property type="status" value="ALT_INIT"/>
    <property type="molecule type" value="Genomic_DNA"/>
</dbReference>
<dbReference type="CCDS" id="CCDS31625.1"/>
<dbReference type="RefSeq" id="NP_944605.2">
    <property type="nucleotide sequence ID" value="NM_198923.2"/>
</dbReference>
<dbReference type="PDB" id="7Y12">
    <property type="method" value="EM"/>
    <property type="resolution" value="3.10 A"/>
    <property type="chains" value="R=5-321"/>
</dbReference>
<dbReference type="PDB" id="7Y13">
    <property type="method" value="EM"/>
    <property type="resolution" value="3.10 A"/>
    <property type="chains" value="R=5-321"/>
</dbReference>
<dbReference type="PDB" id="7Y14">
    <property type="method" value="EM"/>
    <property type="resolution" value="3.20 A"/>
    <property type="chains" value="R=5-321"/>
</dbReference>
<dbReference type="PDB" id="7Y15">
    <property type="method" value="EM"/>
    <property type="resolution" value="2.90 A"/>
    <property type="chains" value="R=5-321"/>
</dbReference>
<dbReference type="PDB" id="9DQH">
    <property type="method" value="EM"/>
    <property type="resolution" value="2.92 A"/>
    <property type="chains" value="A=2-321"/>
</dbReference>
<dbReference type="PDB" id="9DQJ">
    <property type="method" value="EM"/>
    <property type="resolution" value="2.90 A"/>
    <property type="chains" value="A=2-321"/>
</dbReference>
<dbReference type="PDBsum" id="7Y12"/>
<dbReference type="PDBsum" id="7Y13"/>
<dbReference type="PDBsum" id="7Y14"/>
<dbReference type="PDBsum" id="7Y15"/>
<dbReference type="PDBsum" id="9DQH"/>
<dbReference type="PDBsum" id="9DQJ"/>
<dbReference type="EMDB" id="EMD-33554"/>
<dbReference type="EMDB" id="EMD-33555"/>
<dbReference type="EMDB" id="EMD-33556"/>
<dbReference type="EMDB" id="EMD-33557"/>
<dbReference type="EMDB" id="EMD-47113"/>
<dbReference type="EMDB" id="EMD-47114"/>
<dbReference type="SMR" id="Q8TDS7"/>
<dbReference type="FunCoup" id="Q8TDS7">
    <property type="interactions" value="125"/>
</dbReference>
<dbReference type="STRING" id="9606.ENSP00000310631"/>
<dbReference type="ChEMBL" id="CHEMBL4523899"/>
<dbReference type="GuidetoPHARMACOLOGY" id="152"/>
<dbReference type="GlyCosmos" id="Q8TDS7">
    <property type="glycosylation" value="4 sites, No reported glycans"/>
</dbReference>
<dbReference type="GlyGen" id="Q8TDS7">
    <property type="glycosylation" value="5 sites"/>
</dbReference>
<dbReference type="iPTMnet" id="Q8TDS7"/>
<dbReference type="PhosphoSitePlus" id="Q8TDS7"/>
<dbReference type="BioMuta" id="MRGPRD"/>
<dbReference type="DMDM" id="50401085"/>
<dbReference type="MassIVE" id="Q8TDS7"/>
<dbReference type="PaxDb" id="9606-ENSP00000310631"/>
<dbReference type="Antibodypedia" id="16747">
    <property type="antibodies" value="101 antibodies from 24 providers"/>
</dbReference>
<dbReference type="DNASU" id="116512"/>
<dbReference type="Ensembl" id="ENST00000309106.3">
    <property type="protein sequence ID" value="ENSP00000310631.3"/>
    <property type="gene ID" value="ENSG00000172938.3"/>
</dbReference>
<dbReference type="GeneID" id="116512"/>
<dbReference type="KEGG" id="hsa:116512"/>
<dbReference type="MANE-Select" id="ENST00000309106.3">
    <property type="protein sequence ID" value="ENSP00000310631.3"/>
    <property type="RefSeq nucleotide sequence ID" value="NM_198923.2"/>
    <property type="RefSeq protein sequence ID" value="NP_944605.2"/>
</dbReference>
<dbReference type="UCSC" id="uc010rqf.2">
    <property type="organism name" value="human"/>
</dbReference>
<dbReference type="AGR" id="HGNC:29626"/>
<dbReference type="CTD" id="116512"/>
<dbReference type="DisGeNET" id="116512"/>
<dbReference type="GeneCards" id="MRGPRD"/>
<dbReference type="HGNC" id="HGNC:29626">
    <property type="gene designation" value="MRGPRD"/>
</dbReference>
<dbReference type="HPA" id="ENSG00000172938">
    <property type="expression patterns" value="Not detected"/>
</dbReference>
<dbReference type="MIM" id="607231">
    <property type="type" value="gene"/>
</dbReference>
<dbReference type="neXtProt" id="NX_Q8TDS7"/>
<dbReference type="OpenTargets" id="ENSG00000172938"/>
<dbReference type="PharmGKB" id="PA134978563"/>
<dbReference type="VEuPathDB" id="HostDB:ENSG00000172938"/>
<dbReference type="eggNOG" id="ENOG502SNJC">
    <property type="taxonomic scope" value="Eukaryota"/>
</dbReference>
<dbReference type="GeneTree" id="ENSGT01030000234639"/>
<dbReference type="HOGENOM" id="CLU_009579_4_1_1"/>
<dbReference type="InParanoid" id="Q8TDS7"/>
<dbReference type="OMA" id="KCHRPRH"/>
<dbReference type="OrthoDB" id="9631784at2759"/>
<dbReference type="PAN-GO" id="Q8TDS7">
    <property type="GO annotations" value="2 GO annotations based on evolutionary models"/>
</dbReference>
<dbReference type="PhylomeDB" id="Q8TDS7"/>
<dbReference type="TreeFam" id="TF336336"/>
<dbReference type="PathwayCommons" id="Q8TDS7"/>
<dbReference type="SignaLink" id="Q8TDS7"/>
<dbReference type="SIGNOR" id="Q8TDS7"/>
<dbReference type="BioGRID-ORCS" id="116512">
    <property type="hits" value="16 hits in 1139 CRISPR screens"/>
</dbReference>
<dbReference type="GeneWiki" id="MRGPRD"/>
<dbReference type="GenomeRNAi" id="116512"/>
<dbReference type="Pharos" id="Q8TDS7">
    <property type="development level" value="Tchem"/>
</dbReference>
<dbReference type="PRO" id="PR:Q8TDS7"/>
<dbReference type="Proteomes" id="UP000005640">
    <property type="component" value="Chromosome 11"/>
</dbReference>
<dbReference type="RNAct" id="Q8TDS7">
    <property type="molecule type" value="protein"/>
</dbReference>
<dbReference type="Bgee" id="ENSG00000172938">
    <property type="expression patterns" value="Expressed in male germ line stem cell (sensu Vertebrata) in testis and 39 other cell types or tissues"/>
</dbReference>
<dbReference type="GO" id="GO:0005615">
    <property type="term" value="C:extracellular space"/>
    <property type="evidence" value="ECO:0007005"/>
    <property type="project" value="UniProtKB"/>
</dbReference>
<dbReference type="GO" id="GO:0005886">
    <property type="term" value="C:plasma membrane"/>
    <property type="evidence" value="ECO:0000318"/>
    <property type="project" value="GO_Central"/>
</dbReference>
<dbReference type="GO" id="GO:0008528">
    <property type="term" value="F:G protein-coupled peptide receptor activity"/>
    <property type="evidence" value="ECO:0007669"/>
    <property type="project" value="Ensembl"/>
</dbReference>
<dbReference type="GO" id="GO:0004930">
    <property type="term" value="F:G protein-coupled receptor activity"/>
    <property type="evidence" value="ECO:0000318"/>
    <property type="project" value="GO_Central"/>
</dbReference>
<dbReference type="GO" id="GO:0007189">
    <property type="term" value="P:adenylate cyclase-activating G protein-coupled receptor signaling pathway"/>
    <property type="evidence" value="ECO:0007669"/>
    <property type="project" value="Ensembl"/>
</dbReference>
<dbReference type="GO" id="GO:0002033">
    <property type="term" value="P:angiotensin-mediated vasodilation involved in regulation of systemic arterial blood pressure"/>
    <property type="evidence" value="ECO:0007669"/>
    <property type="project" value="Ensembl"/>
</dbReference>
<dbReference type="GO" id="GO:0007186">
    <property type="term" value="P:G protein-coupled receptor signaling pathway"/>
    <property type="evidence" value="ECO:0000318"/>
    <property type="project" value="GO_Central"/>
</dbReference>
<dbReference type="CDD" id="cd15108">
    <property type="entry name" value="7tmA_MrgprD"/>
    <property type="match status" value="1"/>
</dbReference>
<dbReference type="FunFam" id="1.20.1070.10:FF:000193">
    <property type="entry name" value="Mas-related G-protein coupled receptor member E"/>
    <property type="match status" value="1"/>
</dbReference>
<dbReference type="Gene3D" id="1.20.1070.10">
    <property type="entry name" value="Rhodopsin 7-helix transmembrane proteins"/>
    <property type="match status" value="1"/>
</dbReference>
<dbReference type="InterPro" id="IPR000276">
    <property type="entry name" value="GPCR_Rhodpsn"/>
</dbReference>
<dbReference type="InterPro" id="IPR017452">
    <property type="entry name" value="GPCR_Rhodpsn_7TM"/>
</dbReference>
<dbReference type="InterPro" id="IPR026232">
    <property type="entry name" value="MRGPCRD"/>
</dbReference>
<dbReference type="InterPro" id="IPR026234">
    <property type="entry name" value="MRGPCRFAMILY"/>
</dbReference>
<dbReference type="PANTHER" id="PTHR11334">
    <property type="entry name" value="MAS-RELATED G-PROTEIN COUPLED RECEPTOR"/>
    <property type="match status" value="1"/>
</dbReference>
<dbReference type="PANTHER" id="PTHR11334:SF57">
    <property type="entry name" value="MAS-RELATED G-PROTEIN COUPLED RECEPTOR MEMBER D"/>
    <property type="match status" value="1"/>
</dbReference>
<dbReference type="Pfam" id="PF00001">
    <property type="entry name" value="7tm_1"/>
    <property type="match status" value="1"/>
</dbReference>
<dbReference type="PRINTS" id="PR00237">
    <property type="entry name" value="GPCRRHODOPSN"/>
</dbReference>
<dbReference type="PRINTS" id="PR02110">
    <property type="entry name" value="MRGPCRD"/>
</dbReference>
<dbReference type="PRINTS" id="PR02108">
    <property type="entry name" value="MRGPCRFAMILY"/>
</dbReference>
<dbReference type="SUPFAM" id="SSF81321">
    <property type="entry name" value="Family A G protein-coupled receptor-like"/>
    <property type="match status" value="1"/>
</dbReference>
<dbReference type="PROSITE" id="PS50262">
    <property type="entry name" value="G_PROTEIN_RECEP_F1_2"/>
    <property type="match status" value="1"/>
</dbReference>
<sequence>MNQTLNSSGTVESALNYSRGSTVHTAYLVLSSLAMFTCLCGMAGNSMVIWLLGFRMHRNPFCIYILNLAAADLLFLFSMASTLSLETQPLVNTTDKVHELMKRLMYFAYTVGLSLLTAISTQRCLSVLFPIWFKCHRPRHLSAWVCGLLWTLCLLMNGLTSSFCSKFLKFNEDRCFRVDMVQAALIMGVLTPVMTLSSLTLFVWVRRSSQQWRRQPTRLFVVVLASVLVFLICSLPLSIYWFVLYWLSLPPEMQVLCFSLSRLSSSVSSSANPVIYFLVGSRRSHRLPTRSLGTVLQQALREEPELEGGETPTVGTNEMGA</sequence>
<accession>Q8TDS7</accession>
<accession>Q8NGK7</accession>
<reference key="1">
    <citation type="journal article" date="2003" name="Proc. Natl. Acad. Sci. U.S.A.">
        <title>Atypical expansion in mice of the sensory neuron-specific Mrg G protein-coupled receptor family.</title>
        <authorList>
            <person name="Zylka M.J."/>
            <person name="Dong X."/>
            <person name="Southwell A.L."/>
            <person name="Anderson D.J."/>
        </authorList>
    </citation>
    <scope>NUCLEOTIDE SEQUENCE [MRNA]</scope>
</reference>
<reference key="2">
    <citation type="journal article" date="2004" name="J. Biol. Chem.">
        <title>Identification of a G protein-coupled receptor specifically responsive to beta-alanine.</title>
        <authorList>
            <person name="Shinohara T."/>
            <person name="Harada M."/>
            <person name="Ogi K."/>
            <person name="Maruyama M."/>
            <person name="Fujii R."/>
            <person name="Tanaka H."/>
            <person name="Fukusumi S."/>
            <person name="Komatsu H."/>
            <person name="Hosoya M."/>
            <person name="Noguchi Y."/>
            <person name="Watanabe T."/>
            <person name="Moriya T."/>
            <person name="Itoh Y."/>
            <person name="Hinuma S."/>
        </authorList>
    </citation>
    <scope>NUCLEOTIDE SEQUENCE [MRNA]</scope>
    <scope>SUBCELLULAR LOCATION</scope>
    <scope>POSSIBLE FUNCTION</scope>
    <source>
        <tissue>Liver</tissue>
    </source>
</reference>
<reference key="3">
    <citation type="journal article" date="2002" name="FEBS Lett.">
        <title>Identification of G protein-coupled receptor genes from the human genome sequence.</title>
        <authorList>
            <person name="Takeda S."/>
            <person name="Kadowaki S."/>
            <person name="Haga T."/>
            <person name="Takaesu H."/>
            <person name="Mitaku S."/>
        </authorList>
    </citation>
    <scope>NUCLEOTIDE SEQUENCE [LARGE SCALE GENOMIC DNA]</scope>
</reference>
<reference key="4">
    <citation type="submission" date="2001-07" db="EMBL/GenBank/DDBJ databases">
        <title>Genome-wide discovery and analysis of human seven transmembrane helix receptor genes.</title>
        <authorList>
            <person name="Suwa M."/>
            <person name="Sato T."/>
            <person name="Okouchi I."/>
            <person name="Arita M."/>
            <person name="Futami K."/>
            <person name="Matsumoto S."/>
            <person name="Tsutsumi S."/>
            <person name="Aburatani H."/>
            <person name="Asai K."/>
            <person name="Akiyama Y."/>
        </authorList>
    </citation>
    <scope>NUCLEOTIDE SEQUENCE [GENOMIC DNA]</scope>
</reference>
<organism>
    <name type="scientific">Homo sapiens</name>
    <name type="common">Human</name>
    <dbReference type="NCBI Taxonomy" id="9606"/>
    <lineage>
        <taxon>Eukaryota</taxon>
        <taxon>Metazoa</taxon>
        <taxon>Chordata</taxon>
        <taxon>Craniata</taxon>
        <taxon>Vertebrata</taxon>
        <taxon>Euteleostomi</taxon>
        <taxon>Mammalia</taxon>
        <taxon>Eutheria</taxon>
        <taxon>Euarchontoglires</taxon>
        <taxon>Primates</taxon>
        <taxon>Haplorrhini</taxon>
        <taxon>Catarrhini</taxon>
        <taxon>Hominidae</taxon>
        <taxon>Homo</taxon>
    </lineage>
</organism>
<name>MRGRD_HUMAN</name>
<proteinExistence type="evidence at protein level"/>
<gene>
    <name type="primary">MRGPRD</name>
    <name type="synonym">MRGD</name>
</gene>
<evidence type="ECO:0000255" key="1"/>
<evidence type="ECO:0000255" key="2">
    <source>
        <dbReference type="PROSITE-ProRule" id="PRU00521"/>
    </source>
</evidence>
<evidence type="ECO:0000256" key="3">
    <source>
        <dbReference type="SAM" id="MobiDB-lite"/>
    </source>
</evidence>
<evidence type="ECO:0000269" key="4">
    <source>
    </source>
</evidence>
<evidence type="ECO:0000305" key="5"/>
<evidence type="ECO:0007829" key="6">
    <source>
        <dbReference type="PDB" id="7Y12"/>
    </source>
</evidence>
<evidence type="ECO:0007829" key="7">
    <source>
        <dbReference type="PDB" id="7Y15"/>
    </source>
</evidence>
<feature type="chain" id="PRO_0000069756" description="Mas-related G-protein coupled receptor member D">
    <location>
        <begin position="1"/>
        <end position="321"/>
    </location>
</feature>
<feature type="topological domain" description="Extracellular" evidence="1">
    <location>
        <begin position="1"/>
        <end position="33"/>
    </location>
</feature>
<feature type="transmembrane region" description="Helical; Name=1" evidence="1">
    <location>
        <begin position="34"/>
        <end position="54"/>
    </location>
</feature>
<feature type="topological domain" description="Cytoplasmic" evidence="1">
    <location>
        <begin position="55"/>
        <end position="59"/>
    </location>
</feature>
<feature type="transmembrane region" description="Helical; Name=2" evidence="1">
    <location>
        <begin position="60"/>
        <end position="80"/>
    </location>
</feature>
<feature type="topological domain" description="Extracellular" evidence="1">
    <location>
        <begin position="81"/>
        <end position="112"/>
    </location>
</feature>
<feature type="transmembrane region" description="Helical; Name=3" evidence="1">
    <location>
        <begin position="113"/>
        <end position="133"/>
    </location>
</feature>
<feature type="topological domain" description="Cytoplasmic" evidence="1">
    <location>
        <begin position="134"/>
        <end position="142"/>
    </location>
</feature>
<feature type="transmembrane region" description="Helical; Name=4" evidence="1">
    <location>
        <begin position="143"/>
        <end position="163"/>
    </location>
</feature>
<feature type="topological domain" description="Extracellular" evidence="1">
    <location>
        <begin position="164"/>
        <end position="184"/>
    </location>
</feature>
<feature type="transmembrane region" description="Helical; Name=5" evidence="1">
    <location>
        <begin position="185"/>
        <end position="205"/>
    </location>
</feature>
<feature type="topological domain" description="Cytoplasmic" evidence="1">
    <location>
        <begin position="206"/>
        <end position="218"/>
    </location>
</feature>
<feature type="transmembrane region" description="Helical; Name=6" evidence="1">
    <location>
        <begin position="219"/>
        <end position="239"/>
    </location>
</feature>
<feature type="topological domain" description="Extracellular" evidence="1">
    <location>
        <begin position="240"/>
        <end position="257"/>
    </location>
</feature>
<feature type="transmembrane region" description="Helical; Name=7" evidence="1">
    <location>
        <begin position="258"/>
        <end position="280"/>
    </location>
</feature>
<feature type="topological domain" description="Cytoplasmic" evidence="1">
    <location>
        <begin position="281"/>
        <end position="321"/>
    </location>
</feature>
<feature type="region of interest" description="Disordered" evidence="3">
    <location>
        <begin position="302"/>
        <end position="321"/>
    </location>
</feature>
<feature type="glycosylation site" description="N-linked (GlcNAc...) asparagine" evidence="1">
    <location>
        <position position="2"/>
    </location>
</feature>
<feature type="glycosylation site" description="N-linked (GlcNAc...) asparagine" evidence="1">
    <location>
        <position position="6"/>
    </location>
</feature>
<feature type="glycosylation site" description="N-linked (GlcNAc...) asparagine" evidence="1">
    <location>
        <position position="16"/>
    </location>
</feature>
<feature type="glycosylation site" description="N-linked (GlcNAc...) asparagine" evidence="1">
    <location>
        <position position="92"/>
    </location>
</feature>
<feature type="helix" evidence="7">
    <location>
        <begin position="23"/>
        <end position="52"/>
    </location>
</feature>
<feature type="strand" evidence="7">
    <location>
        <begin position="53"/>
        <end position="56"/>
    </location>
</feature>
<feature type="helix" evidence="7">
    <location>
        <begin position="62"/>
        <end position="86"/>
    </location>
</feature>
<feature type="strand" evidence="7">
    <location>
        <begin position="91"/>
        <end position="96"/>
    </location>
</feature>
<feature type="helix" evidence="7">
    <location>
        <begin position="97"/>
        <end position="128"/>
    </location>
</feature>
<feature type="helix" evidence="7">
    <location>
        <begin position="130"/>
        <end position="135"/>
    </location>
</feature>
<feature type="helix" evidence="7">
    <location>
        <begin position="141"/>
        <end position="164"/>
    </location>
</feature>
<feature type="turn" evidence="7">
    <location>
        <begin position="166"/>
        <end position="168"/>
    </location>
</feature>
<feature type="helix" evidence="7">
    <location>
        <begin position="173"/>
        <end position="208"/>
    </location>
</feature>
<feature type="turn" evidence="7">
    <location>
        <begin position="209"/>
        <end position="212"/>
    </location>
</feature>
<feature type="helix" evidence="7">
    <location>
        <begin position="217"/>
        <end position="233"/>
    </location>
</feature>
<feature type="helix" evidence="7">
    <location>
        <begin position="235"/>
        <end position="244"/>
    </location>
</feature>
<feature type="strand" evidence="7">
    <location>
        <begin position="245"/>
        <end position="247"/>
    </location>
</feature>
<feature type="turn" evidence="6">
    <location>
        <begin position="251"/>
        <end position="253"/>
    </location>
</feature>
<feature type="helix" evidence="7">
    <location>
        <begin position="254"/>
        <end position="276"/>
    </location>
</feature>
<feature type="turn" evidence="7">
    <location>
        <begin position="277"/>
        <end position="280"/>
    </location>
</feature>
<feature type="turn" evidence="6">
    <location>
        <begin position="282"/>
        <end position="284"/>
    </location>
</feature>
<keyword id="KW-0002">3D-structure</keyword>
<keyword id="KW-1003">Cell membrane</keyword>
<keyword id="KW-0297">G-protein coupled receptor</keyword>
<keyword id="KW-0325">Glycoprotein</keyword>
<keyword id="KW-0472">Membrane</keyword>
<keyword id="KW-0675">Receptor</keyword>
<keyword id="KW-1185">Reference proteome</keyword>
<keyword id="KW-0807">Transducer</keyword>
<keyword id="KW-0812">Transmembrane</keyword>
<keyword id="KW-1133">Transmembrane helix</keyword>
<protein>
    <recommendedName>
        <fullName>Mas-related G-protein coupled receptor member D</fullName>
    </recommendedName>
    <alternativeName>
        <fullName>Beta-alanine receptor</fullName>
    </alternativeName>
    <alternativeName>
        <fullName>G-protein coupled receptor TGR7</fullName>
    </alternativeName>
</protein>
<comment type="function">
    <text>May regulate nociceptor function and/or development, including the sensation or modulation of pain. Functions as a specific membrane receptor for beta-alanine. Beta-alanine at micromolar doses specifically evoked Ca(2+) influx in cells expressing the receptor. Beta-alanine decreases forskolin-stimulated cAMP production in cells expressing the receptor, suggesting that the receptor couples with G-protein G(q) and G(i).</text>
</comment>
<comment type="subcellular location">
    <subcellularLocation>
        <location evidence="4">Cell membrane</location>
        <topology evidence="4">Multi-pass membrane protein</topology>
    </subcellularLocation>
    <text>Localized at the plasma membrane but internalized into the cytoplasm after treatment with beta-alanine.</text>
</comment>
<comment type="similarity">
    <text evidence="2">Belongs to the G-protein coupled receptor 1 family. Mas subfamily.</text>
</comment>
<comment type="sequence caution" evidence="5">
    <conflict type="erroneous initiation">
        <sequence resource="EMBL-CDS" id="BAC06005"/>
    </conflict>
</comment>